<feature type="initiator methionine" description="Removed" evidence="1">
    <location>
        <position position="1"/>
    </location>
</feature>
<feature type="chain" id="PRO_0000096620" description="Mitochondrial transcription factor 1">
    <location>
        <begin position="2"/>
        <end position="338"/>
    </location>
</feature>
<feature type="binding site" evidence="2">
    <location>
        <position position="23"/>
    </location>
    <ligand>
        <name>S-adenosyl-L-methionine</name>
        <dbReference type="ChEBI" id="CHEBI:59789"/>
    </ligand>
</feature>
<feature type="binding site" evidence="2">
    <location>
        <position position="76"/>
    </location>
    <ligand>
        <name>S-adenosyl-L-methionine</name>
        <dbReference type="ChEBI" id="CHEBI:59789"/>
    </ligand>
</feature>
<feature type="binding site" evidence="2">
    <location>
        <position position="100"/>
    </location>
    <ligand>
        <name>S-adenosyl-L-methionine</name>
        <dbReference type="ChEBI" id="CHEBI:59789"/>
    </ligand>
</feature>
<feature type="binding site" evidence="2">
    <location>
        <position position="136"/>
    </location>
    <ligand>
        <name>S-adenosyl-L-methionine</name>
        <dbReference type="ChEBI" id="CHEBI:59789"/>
    </ligand>
</feature>
<name>MTF1_LACKL</name>
<organism>
    <name type="scientific">Lachancea kluyveri</name>
    <name type="common">Yeast</name>
    <name type="synonym">Saccharomyces kluyveri</name>
    <dbReference type="NCBI Taxonomy" id="4934"/>
    <lineage>
        <taxon>Eukaryota</taxon>
        <taxon>Fungi</taxon>
        <taxon>Dikarya</taxon>
        <taxon>Ascomycota</taxon>
        <taxon>Saccharomycotina</taxon>
        <taxon>Saccharomycetes</taxon>
        <taxon>Saccharomycetales</taxon>
        <taxon>Saccharomycetaceae</taxon>
        <taxon>Lachancea</taxon>
    </lineage>
</organism>
<evidence type="ECO:0000250" key="1"/>
<evidence type="ECO:0000255" key="2">
    <source>
        <dbReference type="PROSITE-ProRule" id="PRU01026"/>
    </source>
</evidence>
<proteinExistence type="inferred from homology"/>
<reference key="1">
    <citation type="journal article" date="1996" name="Gene Expr.">
        <title>Functional conservation of yeast mtTFB despite extensive sequence divergence.</title>
        <authorList>
            <person name="Carrodeguas J.A."/>
            <person name="Yun S."/>
            <person name="Shadel G.S."/>
            <person name="Clayton D.A."/>
            <person name="Bogenhagen D.F."/>
        </authorList>
    </citation>
    <scope>NUCLEOTIDE SEQUENCE [GENOMIC DNA]</scope>
    <source>
        <strain>ATCC 22512 / NRRL Y-4288-3</strain>
    </source>
</reference>
<accession>P87292</accession>
<protein>
    <recommendedName>
        <fullName>Mitochondrial transcription factor 1</fullName>
        <ecNumber>2.1.1.-</ecNumber>
    </recommendedName>
    <alternativeName>
        <fullName>Mitochondrial transcription factor mtTFB</fullName>
    </alternativeName>
</protein>
<gene>
    <name type="primary">MTF1</name>
</gene>
<keyword id="KW-0238">DNA-binding</keyword>
<keyword id="KW-0489">Methyltransferase</keyword>
<keyword id="KW-0496">Mitochondrion</keyword>
<keyword id="KW-0694">RNA-binding</keyword>
<keyword id="KW-0949">S-adenosyl-L-methionine</keyword>
<keyword id="KW-0804">Transcription</keyword>
<keyword id="KW-0805">Transcription regulation</keyword>
<keyword id="KW-0808">Transferase</keyword>
<dbReference type="EC" id="2.1.1.-"/>
<dbReference type="EMBL" id="U81619">
    <property type="protein sequence ID" value="AAC49738.1"/>
    <property type="molecule type" value="Genomic_DNA"/>
</dbReference>
<dbReference type="SMR" id="P87292"/>
<dbReference type="GO" id="GO:0034245">
    <property type="term" value="C:mitochondrial DNA-directed RNA polymerase complex"/>
    <property type="evidence" value="ECO:0007669"/>
    <property type="project" value="TreeGrafter"/>
</dbReference>
<dbReference type="GO" id="GO:0005759">
    <property type="term" value="C:mitochondrial matrix"/>
    <property type="evidence" value="ECO:0007669"/>
    <property type="project" value="TreeGrafter"/>
</dbReference>
<dbReference type="GO" id="GO:0003677">
    <property type="term" value="F:DNA binding"/>
    <property type="evidence" value="ECO:0007669"/>
    <property type="project" value="UniProtKB-KW"/>
</dbReference>
<dbReference type="GO" id="GO:0008168">
    <property type="term" value="F:methyltransferase activity"/>
    <property type="evidence" value="ECO:0007669"/>
    <property type="project" value="UniProtKB-KW"/>
</dbReference>
<dbReference type="GO" id="GO:0034246">
    <property type="term" value="F:mitochondrial transcription factor activity"/>
    <property type="evidence" value="ECO:0007669"/>
    <property type="project" value="InterPro"/>
</dbReference>
<dbReference type="GO" id="GO:0003723">
    <property type="term" value="F:RNA binding"/>
    <property type="evidence" value="ECO:0007669"/>
    <property type="project" value="UniProtKB-KW"/>
</dbReference>
<dbReference type="GO" id="GO:0032259">
    <property type="term" value="P:methylation"/>
    <property type="evidence" value="ECO:0007669"/>
    <property type="project" value="UniProtKB-KW"/>
</dbReference>
<dbReference type="GO" id="GO:0006391">
    <property type="term" value="P:transcription initiation at mitochondrial promoter"/>
    <property type="evidence" value="ECO:0007669"/>
    <property type="project" value="InterPro"/>
</dbReference>
<dbReference type="Gene3D" id="1.10.8.100">
    <property type="entry name" value="Ribosomal RNA adenine dimethylase-like, domain 2"/>
    <property type="match status" value="1"/>
</dbReference>
<dbReference type="Gene3D" id="3.40.50.150">
    <property type="entry name" value="Vaccinia Virus protein VP39"/>
    <property type="match status" value="1"/>
</dbReference>
<dbReference type="InterPro" id="IPR001737">
    <property type="entry name" value="KsgA/Erm"/>
</dbReference>
<dbReference type="InterPro" id="IPR016586">
    <property type="entry name" value="Mtf1"/>
</dbReference>
<dbReference type="InterPro" id="IPR023165">
    <property type="entry name" value="rRNA_Ade_diMease-like_C"/>
</dbReference>
<dbReference type="InterPro" id="IPR029063">
    <property type="entry name" value="SAM-dependent_MTases_sf"/>
</dbReference>
<dbReference type="PANTHER" id="PTHR11727">
    <property type="entry name" value="DIMETHYLADENOSINE TRANSFERASE"/>
    <property type="match status" value="1"/>
</dbReference>
<dbReference type="PANTHER" id="PTHR11727:SF17">
    <property type="entry name" value="DIMETHYLADENOSINE TRANSFERASE 1, MITOCHONDRIAL"/>
    <property type="match status" value="1"/>
</dbReference>
<dbReference type="Pfam" id="PF00398">
    <property type="entry name" value="RrnaAD"/>
    <property type="match status" value="1"/>
</dbReference>
<dbReference type="PIRSF" id="PIRSF011649">
    <property type="entry name" value="MtTFB"/>
    <property type="match status" value="1"/>
</dbReference>
<dbReference type="SUPFAM" id="SSF53335">
    <property type="entry name" value="S-adenosyl-L-methionine-dependent methyltransferases"/>
    <property type="match status" value="1"/>
</dbReference>
<dbReference type="PROSITE" id="PS51689">
    <property type="entry name" value="SAM_RNA_A_N6_MT"/>
    <property type="match status" value="1"/>
</dbReference>
<sequence length="338" mass="39204">MSVHIPTLNSATKIKHYYGFKYLLNSSVHTQIYNKLQLQSTYKMDELKVLDLYPGPSQHSAIFRNIFNPKQYVLMDSRPDFVKFIQDNFAGTSMELYQRDPYEWSSYTDMIEKEKRFVPNRQSRDKIHNQFLVMANLTGMIGEGLFMQWLSCIGNKNWLQRFGRVKMLVWVPEATAHKVLARPGSLIRAKCSVVTEAFTDTKLVATSDSSTLQKFSSSLLEGHDPIIFSTRDTWLNSGKPISLLEVNPIDHDIDLDNWDYVTKHLLILKSTPLHTAIDSLGHGGKQYFSEKVEDKLLMDKCPKDLTNKEFVYLTSIFNNWPFKPDIYMDFIDVFQENE</sequence>
<comment type="function">
    <text evidence="1">Mitochondrial transcription factor that confers selective promoter recognition on the core subunit of the yeast mitochondrial RNA polymerase. Interacts with DNA in a non-specific manner (By similarity).</text>
</comment>
<comment type="subcellular location">
    <subcellularLocation>
        <location evidence="1">Mitochondrion</location>
    </subcellularLocation>
</comment>
<comment type="similarity">
    <text evidence="2">Belongs to the class I-like SAM-binding methyltransferase superfamily. rRNA adenine N(6)-methyltransferase family.</text>
</comment>